<reference key="1">
    <citation type="journal article" date="2002" name="BMC Genomics">
        <title>Cynomolgus monkey testicular cDNAs for discovery of novel human genes in the human genome sequence.</title>
        <authorList>
            <person name="Osada N."/>
            <person name="Hida M."/>
            <person name="Kusuda J."/>
            <person name="Tanuma R."/>
            <person name="Hirata M."/>
            <person name="Suto Y."/>
            <person name="Hirai M."/>
            <person name="Terao K."/>
            <person name="Sugano S."/>
            <person name="Hashimoto K."/>
        </authorList>
    </citation>
    <scope>NUCLEOTIDE SEQUENCE [LARGE SCALE MRNA] (ISOFORM 1)</scope>
    <source>
        <tissue>Testis</tissue>
    </source>
</reference>
<reference key="2">
    <citation type="submission" date="2005-06" db="EMBL/GenBank/DDBJ databases">
        <title>DNA sequences of macaque genes expressed in brain or testis and its evolutionary implications.</title>
        <authorList>
            <consortium name="International consortium for macaque cDNA sequencing and analysis"/>
        </authorList>
    </citation>
    <scope>NUCLEOTIDE SEQUENCE [LARGE SCALE MRNA] (ISOFORM 2)</scope>
    <source>
        <tissue>Testis</tissue>
    </source>
</reference>
<reference key="3">
    <citation type="submission" date="2001-08" db="EMBL/GenBank/DDBJ databases">
        <title>Isolation of novel full-length cDNA clones from macaque testis cDNA libraries.</title>
        <authorList>
            <person name="Hashimoto K."/>
            <person name="Osada N."/>
            <person name="Hida M."/>
            <person name="Kusuda J."/>
            <person name="Tanuma R."/>
            <person name="Hirai M."/>
            <person name="Terao K."/>
            <person name="Sugano S."/>
        </authorList>
    </citation>
    <scope>NUCLEOTIDE SEQUENCE [LARGE SCALE MRNA] OF 273-840 (ISOFORM 2)</scope>
    <source>
        <tissue>Testis</tissue>
    </source>
</reference>
<evidence type="ECO:0000255" key="1"/>
<evidence type="ECO:0000256" key="2">
    <source>
        <dbReference type="SAM" id="MobiDB-lite"/>
    </source>
</evidence>
<evidence type="ECO:0000303" key="3">
    <source ref="2"/>
</evidence>
<evidence type="ECO:0000303" key="4">
    <source ref="3"/>
</evidence>
<evidence type="ECO:0000305" key="5"/>
<gene>
    <name type="primary">CAGE1</name>
    <name type="ORF">QtsA-12423</name>
    <name type="ORF">QtsA-14351</name>
    <name type="ORF">QtsA-17576</name>
</gene>
<keyword id="KW-0025">Alternative splicing</keyword>
<keyword id="KW-0175">Coiled coil</keyword>
<keyword id="KW-1185">Reference proteome</keyword>
<dbReference type="EMBL" id="AB070119">
    <property type="protein sequence ID" value="BAB63064.1"/>
    <property type="molecule type" value="mRNA"/>
</dbReference>
<dbReference type="EMBL" id="AB169153">
    <property type="protein sequence ID" value="BAE01246.1"/>
    <property type="molecule type" value="mRNA"/>
</dbReference>
<dbReference type="EMBL" id="AB070045">
    <property type="protein sequence ID" value="BAB62990.1"/>
    <property type="status" value="ALT_INIT"/>
    <property type="molecule type" value="mRNA"/>
</dbReference>
<dbReference type="SMR" id="Q95JR0"/>
<dbReference type="STRING" id="9541.ENSMFAP00000032876"/>
<dbReference type="eggNOG" id="KOG3650">
    <property type="taxonomic scope" value="Eukaryota"/>
</dbReference>
<dbReference type="Proteomes" id="UP000233100">
    <property type="component" value="Unplaced"/>
</dbReference>
<dbReference type="InterPro" id="IPR052686">
    <property type="entry name" value="CAGE1_homolog"/>
</dbReference>
<dbReference type="InterPro" id="IPR029381">
    <property type="entry name" value="CAGE1_N"/>
</dbReference>
<dbReference type="PANTHER" id="PTHR36864">
    <property type="entry name" value="CANCER-ASSOCIATED GENE 1 PROTEIN"/>
    <property type="match status" value="1"/>
</dbReference>
<dbReference type="PANTHER" id="PTHR36864:SF1">
    <property type="entry name" value="CANCER-ASSOCIATED GENE 1 PROTEIN"/>
    <property type="match status" value="1"/>
</dbReference>
<dbReference type="Pfam" id="PF15066">
    <property type="entry name" value="CAGE1"/>
    <property type="match status" value="2"/>
</dbReference>
<proteinExistence type="evidence at transcript level"/>
<sequence length="840" mass="97587">MNKDYQIFWPSPSDPVRFEVDTSHEKVESISESDTMNVSNLSQGIMLSDSPICMETTSTTCDLPQNEIKNFERENEYESTLCEDAYGTLDNLLNDNNIENYSKNVLTQPVDTISISSLRQFDTVCKFHCVEAFDDEMTEKPEFQSQVYNYAKDNNIKQDSFREENPMETSVSASTDQLGNEYFRQPPPRSPPLIHCSGETLKFPEKSLAKSTAKESALNPSQPPSFVCKTAVPSKEIQNYGEIPEMSVSYAKEVTAEGVERPEIVSTWSSAGISWRSKASQENCEMPDMEQSAESLQPVQEDMALNEILKKLKHTNRKQEARIQELQCSNLYLEKRVKELQMKTTKQQVFIDVIDKLKENVEELIEEKYKIILEKNDTKKTLQNLQEILANTQKHLQESRNDKEMLQLQFKKIKANYVRLQERYMTEMQQKNKSVSQYLEMDKTLSKKEEEVKRLQQLRKEQEKVTASALDLLKREKETQEQEFLSLQEEFQKRDKANLEERQKLKSRLEKLLTQVKNLQFMSENERAKNIKLQQQINEVKNENKKLKQHVARSEEQNYVPKSETAQLKEQLEEVMKSDITKDTKMTHSNLLLDCSPCEEESLNPADIERSSQLASKMHSLLALMVGLLKCQDITNSDAEHFKESEKVSDIMLQRLKSLHLKKKNLDKELLKHKDRITTFRDLIAKEKAFQDHAIKVTDCDSDEAKSIRDVPTFLGAKLDKYHSLNEELDFLITKLGCLLESKESHCNRLIEENDKYQRHLGSLIKKVTSYEEIIECADQRLAISHSQIAHLEKRNKHLEDLIRKPREKARKPRSKSLENHPKSMTMMPAVFKENRNDLD</sequence>
<organism>
    <name type="scientific">Macaca fascicularis</name>
    <name type="common">Crab-eating macaque</name>
    <name type="synonym">Cynomolgus monkey</name>
    <dbReference type="NCBI Taxonomy" id="9541"/>
    <lineage>
        <taxon>Eukaryota</taxon>
        <taxon>Metazoa</taxon>
        <taxon>Chordata</taxon>
        <taxon>Craniata</taxon>
        <taxon>Vertebrata</taxon>
        <taxon>Euteleostomi</taxon>
        <taxon>Mammalia</taxon>
        <taxon>Eutheria</taxon>
        <taxon>Euarchontoglires</taxon>
        <taxon>Primates</taxon>
        <taxon>Haplorrhini</taxon>
        <taxon>Catarrhini</taxon>
        <taxon>Cercopithecidae</taxon>
        <taxon>Cercopithecinae</taxon>
        <taxon>Macaca</taxon>
    </lineage>
</organism>
<feature type="chain" id="PRO_0000280751" description="Cancer-associated gene 1 protein homolog">
    <location>
        <begin position="1"/>
        <end position="840"/>
    </location>
</feature>
<feature type="region of interest" description="Disordered" evidence="2">
    <location>
        <begin position="800"/>
        <end position="840"/>
    </location>
</feature>
<feature type="coiled-coil region" evidence="1">
    <location>
        <begin position="303"/>
        <end position="559"/>
    </location>
</feature>
<feature type="compositionally biased region" description="Basic residues" evidence="2">
    <location>
        <begin position="806"/>
        <end position="815"/>
    </location>
</feature>
<feature type="splice variant" id="VSP_023905" description="In isoform 2." evidence="3 4">
    <location>
        <begin position="648"/>
        <end position="669"/>
    </location>
</feature>
<feature type="sequence conflict" description="In Ref. 2; BAE01246." evidence="5" ref="2">
    <original>K</original>
    <variation>R</variation>
    <location>
        <position position="3"/>
    </location>
</feature>
<feature type="sequence conflict" description="In Ref. 2; BAE01246." evidence="5" ref="2">
    <original>T</original>
    <variation>I</variation>
    <location>
        <position position="315"/>
    </location>
</feature>
<accession>Q95JR0</accession>
<accession>Q4R6M9</accession>
<accession>Q95JY2</accession>
<comment type="alternative products">
    <event type="alternative splicing"/>
    <isoform>
        <id>Q95JR0-1</id>
        <name>1</name>
        <sequence type="displayed"/>
    </isoform>
    <isoform>
        <id>Q95JR0-2</id>
        <name>2</name>
        <sequence type="described" ref="VSP_023905"/>
    </isoform>
</comment>
<comment type="sequence caution" evidence="5">
    <conflict type="erroneous initiation">
        <sequence resource="EMBL-CDS" id="BAB62990"/>
    </conflict>
</comment>
<name>CAGE1_MACFA</name>
<protein>
    <recommendedName>
        <fullName>Cancer-associated gene 1 protein homolog</fullName>
        <shortName>CAGE-1</shortName>
    </recommendedName>
</protein>